<comment type="function">
    <text evidence="1">Although its dehydrogenase activity is NAD-specific, it can also utilize NADP at a reduced efficiency.</text>
</comment>
<comment type="catalytic activity">
    <reaction evidence="1 3">
        <text>(6R)-5,10-methylene-5,6,7,8-tetrahydrofolate + NAD(+) = (6R)-5,10-methenyltetrahydrofolate + NADH</text>
        <dbReference type="Rhea" id="RHEA:22892"/>
        <dbReference type="ChEBI" id="CHEBI:15636"/>
        <dbReference type="ChEBI" id="CHEBI:57455"/>
        <dbReference type="ChEBI" id="CHEBI:57540"/>
        <dbReference type="ChEBI" id="CHEBI:57945"/>
        <dbReference type="EC" id="1.5.1.15"/>
    </reaction>
</comment>
<comment type="catalytic activity">
    <reaction evidence="8">
        <text>(6R)-5,10-methenyltetrahydrofolate + H2O = (6R)-10-formyltetrahydrofolate + H(+)</text>
        <dbReference type="Rhea" id="RHEA:23700"/>
        <dbReference type="ChEBI" id="CHEBI:15377"/>
        <dbReference type="ChEBI" id="CHEBI:15378"/>
        <dbReference type="ChEBI" id="CHEBI:57455"/>
        <dbReference type="ChEBI" id="CHEBI:195366"/>
        <dbReference type="EC" id="3.5.4.9"/>
    </reaction>
</comment>
<comment type="cofactor">
    <cofactor evidence="3">
        <name>Mg(2+)</name>
        <dbReference type="ChEBI" id="CHEBI:18420"/>
    </cofactor>
</comment>
<comment type="biophysicochemical properties">
    <kinetics>
        <KM evidence="1">202 uM for NAD</KM>
        <KM evidence="1">352 uM for NADP</KM>
        <Vmax evidence="1">22.5 umol/min/mg enzyme with NAD as substrate</Vmax>
        <Vmax evidence="1">2.92 umol/min/mg enzyme with NADP as substrate</Vmax>
    </kinetics>
</comment>
<comment type="subunit">
    <text evidence="2">Homodimer.</text>
</comment>
<comment type="interaction">
    <interactant intactId="EBI-1058895">
        <id>P13995</id>
    </interactant>
    <interactant intactId="EBI-11526455">
        <id>Q9UJ70-2</id>
        <label>NAGK</label>
    </interactant>
    <organismsDiffer>false</organismsDiffer>
    <experiments>3</experiments>
</comment>
<comment type="subcellular location">
    <subcellularLocation>
        <location>Mitochondrion</location>
    </subcellularLocation>
</comment>
<comment type="alternative products">
    <event type="alternative splicing"/>
    <isoform>
        <id>P13995-1</id>
        <name>1</name>
        <sequence type="displayed"/>
    </isoform>
    <isoform>
        <id>P13995-2</id>
        <name>2</name>
        <sequence type="described" ref="VSP_056188"/>
    </isoform>
</comment>
<comment type="developmental stage">
    <text>Expressed only in developing normal tissues.</text>
</comment>
<comment type="miscellaneous">
    <text>This NAD-dependent bifunctional enzyme has very different kinetic properties than the larger NADP-dependent trifunctional enzyme and is unique in that it requires formation of an enzyme-magnesium complex to allow binding of NAD.</text>
</comment>
<comment type="similarity">
    <text evidence="7">Belongs to the tetrahydrofolate dehydrogenase/cyclohydrolase family.</text>
</comment>
<comment type="sequence caution" evidence="7">
    <conflict type="erroneous initiation">
        <sequence resource="EMBL-CDS" id="AAX93061"/>
    </conflict>
</comment>
<comment type="sequence caution" evidence="7">
    <conflict type="erroneous initiation">
        <sequence resource="EMBL-CDS" id="BAD96546"/>
    </conflict>
</comment>
<comment type="sequence caution" evidence="7">
    <conflict type="erroneous initiation">
        <sequence resource="EMBL-CDS" id="BAD96761"/>
    </conflict>
</comment>
<comment type="sequence caution" evidence="7">
    <conflict type="erroneous initiation">
        <sequence resource="EMBL-CDS" id="CAA34431"/>
    </conflict>
</comment>
<protein>
    <recommendedName>
        <fullName>Bifunctional methylenetetrahydrofolate dehydrogenase/cyclohydrolase, mitochondrial</fullName>
    </recommendedName>
    <domain>
        <recommendedName>
            <fullName evidence="6">NAD-dependent methylenetetrahydrofolate dehydrogenase</fullName>
            <ecNumber evidence="1 3">1.5.1.15</ecNumber>
        </recommendedName>
    </domain>
    <domain>
        <recommendedName>
            <fullName>Methenyltetrahydrofolate cyclohydrolase</fullName>
            <ecNumber evidence="8">3.5.4.9</ecNumber>
        </recommendedName>
    </domain>
</protein>
<gene>
    <name type="primary">MTHFD2</name>
    <name type="synonym">NMDMC</name>
</gene>
<reference key="1">
    <citation type="journal article" date="1989" name="Nucleic Acids Res.">
        <title>Nucleotide sequence of the human NAD-dependent methylene tetrahydrofolate dehydrogenase-cyclohydrolase.</title>
        <authorList>
            <person name="Peri K.G."/>
            <person name="Belanger C."/>
            <person name="Mackenzie R.E."/>
        </authorList>
    </citation>
    <scope>NUCLEOTIDE SEQUENCE [MRNA] OF 3-350 (ISOFORM 1)</scope>
</reference>
<reference key="2">
    <citation type="journal article" date="2004" name="Nat. Genet.">
        <title>Complete sequencing and characterization of 21,243 full-length human cDNAs.</title>
        <authorList>
            <person name="Ota T."/>
            <person name="Suzuki Y."/>
            <person name="Nishikawa T."/>
            <person name="Otsuki T."/>
            <person name="Sugiyama T."/>
            <person name="Irie R."/>
            <person name="Wakamatsu A."/>
            <person name="Hayashi K."/>
            <person name="Sato H."/>
            <person name="Nagai K."/>
            <person name="Kimura K."/>
            <person name="Makita H."/>
            <person name="Sekine M."/>
            <person name="Obayashi M."/>
            <person name="Nishi T."/>
            <person name="Shibahara T."/>
            <person name="Tanaka T."/>
            <person name="Ishii S."/>
            <person name="Yamamoto J."/>
            <person name="Saito K."/>
            <person name="Kawai Y."/>
            <person name="Isono Y."/>
            <person name="Nakamura Y."/>
            <person name="Nagahari K."/>
            <person name="Murakami K."/>
            <person name="Yasuda T."/>
            <person name="Iwayanagi T."/>
            <person name="Wagatsuma M."/>
            <person name="Shiratori A."/>
            <person name="Sudo H."/>
            <person name="Hosoiri T."/>
            <person name="Kaku Y."/>
            <person name="Kodaira H."/>
            <person name="Kondo H."/>
            <person name="Sugawara M."/>
            <person name="Takahashi M."/>
            <person name="Kanda K."/>
            <person name="Yokoi T."/>
            <person name="Furuya T."/>
            <person name="Kikkawa E."/>
            <person name="Omura Y."/>
            <person name="Abe K."/>
            <person name="Kamihara K."/>
            <person name="Katsuta N."/>
            <person name="Sato K."/>
            <person name="Tanikawa M."/>
            <person name="Yamazaki M."/>
            <person name="Ninomiya K."/>
            <person name="Ishibashi T."/>
            <person name="Yamashita H."/>
            <person name="Murakawa K."/>
            <person name="Fujimori K."/>
            <person name="Tanai H."/>
            <person name="Kimata M."/>
            <person name="Watanabe M."/>
            <person name="Hiraoka S."/>
            <person name="Chiba Y."/>
            <person name="Ishida S."/>
            <person name="Ono Y."/>
            <person name="Takiguchi S."/>
            <person name="Watanabe S."/>
            <person name="Yosida M."/>
            <person name="Hotuta T."/>
            <person name="Kusano J."/>
            <person name="Kanehori K."/>
            <person name="Takahashi-Fujii A."/>
            <person name="Hara H."/>
            <person name="Tanase T.-O."/>
            <person name="Nomura Y."/>
            <person name="Togiya S."/>
            <person name="Komai F."/>
            <person name="Hara R."/>
            <person name="Takeuchi K."/>
            <person name="Arita M."/>
            <person name="Imose N."/>
            <person name="Musashino K."/>
            <person name="Yuuki H."/>
            <person name="Oshima A."/>
            <person name="Sasaki N."/>
            <person name="Aotsuka S."/>
            <person name="Yoshikawa Y."/>
            <person name="Matsunawa H."/>
            <person name="Ichihara T."/>
            <person name="Shiohata N."/>
            <person name="Sano S."/>
            <person name="Moriya S."/>
            <person name="Momiyama H."/>
            <person name="Satoh N."/>
            <person name="Takami S."/>
            <person name="Terashima Y."/>
            <person name="Suzuki O."/>
            <person name="Nakagawa S."/>
            <person name="Senoh A."/>
            <person name="Mizoguchi H."/>
            <person name="Goto Y."/>
            <person name="Shimizu F."/>
            <person name="Wakebe H."/>
            <person name="Hishigaki H."/>
            <person name="Watanabe T."/>
            <person name="Sugiyama A."/>
            <person name="Takemoto M."/>
            <person name="Kawakami B."/>
            <person name="Yamazaki M."/>
            <person name="Watanabe K."/>
            <person name="Kumagai A."/>
            <person name="Itakura S."/>
            <person name="Fukuzumi Y."/>
            <person name="Fujimori Y."/>
            <person name="Komiyama M."/>
            <person name="Tashiro H."/>
            <person name="Tanigami A."/>
            <person name="Fujiwara T."/>
            <person name="Ono T."/>
            <person name="Yamada K."/>
            <person name="Fujii Y."/>
            <person name="Ozaki K."/>
            <person name="Hirao M."/>
            <person name="Ohmori Y."/>
            <person name="Kawabata A."/>
            <person name="Hikiji T."/>
            <person name="Kobatake N."/>
            <person name="Inagaki H."/>
            <person name="Ikema Y."/>
            <person name="Okamoto S."/>
            <person name="Okitani R."/>
            <person name="Kawakami T."/>
            <person name="Noguchi S."/>
            <person name="Itoh T."/>
            <person name="Shigeta K."/>
            <person name="Senba T."/>
            <person name="Matsumura K."/>
            <person name="Nakajima Y."/>
            <person name="Mizuno T."/>
            <person name="Morinaga M."/>
            <person name="Sasaki M."/>
            <person name="Togashi T."/>
            <person name="Oyama M."/>
            <person name="Hata H."/>
            <person name="Watanabe M."/>
            <person name="Komatsu T."/>
            <person name="Mizushima-Sugano J."/>
            <person name="Satoh T."/>
            <person name="Shirai Y."/>
            <person name="Takahashi Y."/>
            <person name="Nakagawa K."/>
            <person name="Okumura K."/>
            <person name="Nagase T."/>
            <person name="Nomura N."/>
            <person name="Kikuchi H."/>
            <person name="Masuho Y."/>
            <person name="Yamashita R."/>
            <person name="Nakai K."/>
            <person name="Yada T."/>
            <person name="Nakamura Y."/>
            <person name="Ohara O."/>
            <person name="Isogai T."/>
            <person name="Sugano S."/>
        </authorList>
    </citation>
    <scope>NUCLEOTIDE SEQUENCE [LARGE SCALE MRNA] (ISOFORM 2)</scope>
</reference>
<reference key="3">
    <citation type="submission" date="2005-04" db="EMBL/GenBank/DDBJ databases">
        <authorList>
            <person name="Suzuki Y."/>
            <person name="Sugano S."/>
            <person name="Totoki Y."/>
            <person name="Toyoda A."/>
            <person name="Takeda T."/>
            <person name="Sakaki Y."/>
            <person name="Tanaka A."/>
            <person name="Yokoyama S."/>
        </authorList>
    </citation>
    <scope>NUCLEOTIDE SEQUENCE [LARGE SCALE MRNA] (ISOFORM 1)</scope>
    <source>
        <tissue>Liver</tissue>
        <tissue>Thyroid</tissue>
    </source>
</reference>
<reference key="4">
    <citation type="submission" date="2005-09" db="EMBL/GenBank/DDBJ databases">
        <authorList>
            <person name="Mural R.J."/>
            <person name="Istrail S."/>
            <person name="Sutton G."/>
            <person name="Florea L."/>
            <person name="Halpern A.L."/>
            <person name="Mobarry C.M."/>
            <person name="Lippert R."/>
            <person name="Walenz B."/>
            <person name="Shatkay H."/>
            <person name="Dew I."/>
            <person name="Miller J.R."/>
            <person name="Flanigan M.J."/>
            <person name="Edwards N.J."/>
            <person name="Bolanos R."/>
            <person name="Fasulo D."/>
            <person name="Halldorsson B.V."/>
            <person name="Hannenhalli S."/>
            <person name="Turner R."/>
            <person name="Yooseph S."/>
            <person name="Lu F."/>
            <person name="Nusskern D.R."/>
            <person name="Shue B.C."/>
            <person name="Zheng X.H."/>
            <person name="Zhong F."/>
            <person name="Delcher A.L."/>
            <person name="Huson D.H."/>
            <person name="Kravitz S.A."/>
            <person name="Mouchard L."/>
            <person name="Reinert K."/>
            <person name="Remington K.A."/>
            <person name="Clark A.G."/>
            <person name="Waterman M.S."/>
            <person name="Eichler E.E."/>
            <person name="Adams M.D."/>
            <person name="Hunkapiller M.W."/>
            <person name="Myers E.W."/>
            <person name="Venter J.C."/>
        </authorList>
    </citation>
    <scope>NUCLEOTIDE SEQUENCE [LARGE SCALE GENOMIC DNA]</scope>
</reference>
<reference key="5">
    <citation type="journal article" date="2005" name="Nature">
        <title>Generation and annotation of the DNA sequences of human chromosomes 2 and 4.</title>
        <authorList>
            <person name="Hillier L.W."/>
            <person name="Graves T.A."/>
            <person name="Fulton R.S."/>
            <person name="Fulton L.A."/>
            <person name="Pepin K.H."/>
            <person name="Minx P."/>
            <person name="Wagner-McPherson C."/>
            <person name="Layman D."/>
            <person name="Wylie K."/>
            <person name="Sekhon M."/>
            <person name="Becker M.C."/>
            <person name="Fewell G.A."/>
            <person name="Delehaunty K.D."/>
            <person name="Miner T.L."/>
            <person name="Nash W.E."/>
            <person name="Kremitzki C."/>
            <person name="Oddy L."/>
            <person name="Du H."/>
            <person name="Sun H."/>
            <person name="Bradshaw-Cordum H."/>
            <person name="Ali J."/>
            <person name="Carter J."/>
            <person name="Cordes M."/>
            <person name="Harris A."/>
            <person name="Isak A."/>
            <person name="van Brunt A."/>
            <person name="Nguyen C."/>
            <person name="Du F."/>
            <person name="Courtney L."/>
            <person name="Kalicki J."/>
            <person name="Ozersky P."/>
            <person name="Abbott S."/>
            <person name="Armstrong J."/>
            <person name="Belter E.A."/>
            <person name="Caruso L."/>
            <person name="Cedroni M."/>
            <person name="Cotton M."/>
            <person name="Davidson T."/>
            <person name="Desai A."/>
            <person name="Elliott G."/>
            <person name="Erb T."/>
            <person name="Fronick C."/>
            <person name="Gaige T."/>
            <person name="Haakenson W."/>
            <person name="Haglund K."/>
            <person name="Holmes A."/>
            <person name="Harkins R."/>
            <person name="Kim K."/>
            <person name="Kruchowski S.S."/>
            <person name="Strong C.M."/>
            <person name="Grewal N."/>
            <person name="Goyea E."/>
            <person name="Hou S."/>
            <person name="Levy A."/>
            <person name="Martinka S."/>
            <person name="Mead K."/>
            <person name="McLellan M.D."/>
            <person name="Meyer R."/>
            <person name="Randall-Maher J."/>
            <person name="Tomlinson C."/>
            <person name="Dauphin-Kohlberg S."/>
            <person name="Kozlowicz-Reilly A."/>
            <person name="Shah N."/>
            <person name="Swearengen-Shahid S."/>
            <person name="Snider J."/>
            <person name="Strong J.T."/>
            <person name="Thompson J."/>
            <person name="Yoakum M."/>
            <person name="Leonard S."/>
            <person name="Pearman C."/>
            <person name="Trani L."/>
            <person name="Radionenko M."/>
            <person name="Waligorski J.E."/>
            <person name="Wang C."/>
            <person name="Rock S.M."/>
            <person name="Tin-Wollam A.-M."/>
            <person name="Maupin R."/>
            <person name="Latreille P."/>
            <person name="Wendl M.C."/>
            <person name="Yang S.-P."/>
            <person name="Pohl C."/>
            <person name="Wallis J.W."/>
            <person name="Spieth J."/>
            <person name="Bieri T.A."/>
            <person name="Berkowicz N."/>
            <person name="Nelson J.O."/>
            <person name="Osborne J."/>
            <person name="Ding L."/>
            <person name="Meyer R."/>
            <person name="Sabo A."/>
            <person name="Shotland Y."/>
            <person name="Sinha P."/>
            <person name="Wohldmann P.E."/>
            <person name="Cook L.L."/>
            <person name="Hickenbotham M.T."/>
            <person name="Eldred J."/>
            <person name="Williams D."/>
            <person name="Jones T.A."/>
            <person name="She X."/>
            <person name="Ciccarelli F.D."/>
            <person name="Izaurralde E."/>
            <person name="Taylor J."/>
            <person name="Schmutz J."/>
            <person name="Myers R.M."/>
            <person name="Cox D.R."/>
            <person name="Huang X."/>
            <person name="McPherson J.D."/>
            <person name="Mardis E.R."/>
            <person name="Clifton S.W."/>
            <person name="Warren W.C."/>
            <person name="Chinwalla A.T."/>
            <person name="Eddy S.R."/>
            <person name="Marra M.A."/>
            <person name="Ovcharenko I."/>
            <person name="Furey T.S."/>
            <person name="Miller W."/>
            <person name="Eichler E.E."/>
            <person name="Bork P."/>
            <person name="Suyama M."/>
            <person name="Torrents D."/>
            <person name="Waterston R.H."/>
            <person name="Wilson R.K."/>
        </authorList>
    </citation>
    <scope>NUCLEOTIDE SEQUENCE [LARGE SCALE GENOMIC DNA]</scope>
</reference>
<reference key="6">
    <citation type="journal article" date="2004" name="Genome Res.">
        <title>The status, quality, and expansion of the NIH full-length cDNA project: the Mammalian Gene Collection (MGC).</title>
        <authorList>
            <consortium name="The MGC Project Team"/>
        </authorList>
    </citation>
    <scope>NUCLEOTIDE SEQUENCE [LARGE SCALE MRNA] (ISOFORMS 1 AND 2)</scope>
    <source>
        <tissue>Brain</tissue>
        <tissue>Cervix</tissue>
        <tissue>Colon</tissue>
    </source>
</reference>
<reference key="7">
    <citation type="journal article" date="1993" name="Biochemistry">
        <title>NAD-dependent methylenetetrahydrofolate dehydrogenase-methenyltetrahydrofolate cyclohydrolase is the mammalian homolog of the mitochondrial enzyme encoded by the yeast MIS1 gene.</title>
        <authorList>
            <person name="Yang X.M."/>
            <person name="MacKenzie R.E."/>
        </authorList>
    </citation>
    <scope>CATALYTIC ACTIVITY</scope>
    <scope>COFACTOR</scope>
</reference>
<reference key="8">
    <citation type="journal article" date="2009" name="Science">
        <title>Lysine acetylation targets protein complexes and co-regulates major cellular functions.</title>
        <authorList>
            <person name="Choudhary C."/>
            <person name="Kumar C."/>
            <person name="Gnad F."/>
            <person name="Nielsen M.L."/>
            <person name="Rehman M."/>
            <person name="Walther T.C."/>
            <person name="Olsen J.V."/>
            <person name="Mann M."/>
        </authorList>
    </citation>
    <scope>ACETYLATION [LARGE SCALE ANALYSIS] AT LYS-50</scope>
    <scope>IDENTIFICATION BY MASS SPECTROMETRY [LARGE SCALE ANALYSIS]</scope>
</reference>
<reference key="9">
    <citation type="journal article" date="2011" name="BMC Syst. Biol.">
        <title>Initial characterization of the human central proteome.</title>
        <authorList>
            <person name="Burkard T.R."/>
            <person name="Planyavsky M."/>
            <person name="Kaupe I."/>
            <person name="Breitwieser F.P."/>
            <person name="Buerckstuemmer T."/>
            <person name="Bennett K.L."/>
            <person name="Superti-Furga G."/>
            <person name="Colinge J."/>
        </authorList>
    </citation>
    <scope>IDENTIFICATION BY MASS SPECTROMETRY [LARGE SCALE ANALYSIS]</scope>
</reference>
<reference key="10">
    <citation type="journal article" date="2012" name="Proc. Natl. Acad. Sci. U.S.A.">
        <title>N-terminal acetylome analyses and functional insights of the N-terminal acetyltransferase NatB.</title>
        <authorList>
            <person name="Van Damme P."/>
            <person name="Lasa M."/>
            <person name="Polevoda B."/>
            <person name="Gazquez C."/>
            <person name="Elosegui-Artola A."/>
            <person name="Kim D.S."/>
            <person name="De Juan-Pardo E."/>
            <person name="Demeyer K."/>
            <person name="Hole K."/>
            <person name="Larrea E."/>
            <person name="Timmerman E."/>
            <person name="Prieto J."/>
            <person name="Arnesen T."/>
            <person name="Sherman F."/>
            <person name="Gevaert K."/>
            <person name="Aldabe R."/>
        </authorList>
    </citation>
    <scope>IDENTIFICATION BY MASS SPECTROMETRY [LARGE SCALE ANALYSIS]</scope>
</reference>
<reference key="11">
    <citation type="journal article" date="2015" name="Proteomics">
        <title>N-terminome analysis of the human mitochondrial proteome.</title>
        <authorList>
            <person name="Vaca Jacome A.S."/>
            <person name="Rabilloud T."/>
            <person name="Schaeffer-Reiss C."/>
            <person name="Rompais M."/>
            <person name="Ayoub D."/>
            <person name="Lane L."/>
            <person name="Bairoch A."/>
            <person name="Van Dorsselaer A."/>
            <person name="Carapito C."/>
        </authorList>
    </citation>
    <scope>CLEAVAGE OF TRANSIT PEPTIDE [LARGE SCALE ANALYSIS] AFTER ASN-35</scope>
    <scope>IDENTIFICATION BY MASS SPECTROMETRY [LARGE SCALE ANALYSIS]</scope>
</reference>
<reference key="12">
    <citation type="journal article" date="2017" name="Nat. Struct. Mol. Biol.">
        <title>Site-specific mapping of the human SUMO proteome reveals co-modification with phosphorylation.</title>
        <authorList>
            <person name="Hendriks I.A."/>
            <person name="Lyon D."/>
            <person name="Young C."/>
            <person name="Jensen L.J."/>
            <person name="Vertegaal A.C."/>
            <person name="Nielsen M.L."/>
        </authorList>
    </citation>
    <scope>SUMOYLATION [LARGE SCALE ANALYSIS] AT LYS-50</scope>
    <scope>IDENTIFICATION BY MASS SPECTROMETRY [LARGE SCALE ANALYSIS]</scope>
</reference>
<reference key="13">
    <citation type="journal article" date="2005" name="J. Biol. Chem.">
        <title>Magnesium and phosphate ions enable NAD binding to methylenetetrahydrofolate dehydrogenase-methenyltetrahydrofolate cyclohydrolase.</title>
        <authorList>
            <person name="Christensen K.E."/>
            <person name="Mirza I.A."/>
            <person name="Berghuis A.M."/>
            <person name="Mackenzie R.E."/>
        </authorList>
    </citation>
    <scope>3D-STRUCTURE MODELING OF 36-350 IN COMPLEX WITH NAD AND PHOSPHATE</scope>
    <scope>FUNCTION</scope>
    <scope>CATALYTIC ACTIVITY</scope>
    <scope>BIOPHYSICOCHEMICAL PROPERTIES</scope>
    <scope>MUTAGENESIS OF ASP-168; ARG-201; ASP-225 AND ARG-233</scope>
</reference>
<reference evidence="9" key="14">
    <citation type="journal article" date="2017" name="Cancer Res.">
        <title>Crystal structure of the emerging cancer target MTHFD2 in complex with a substrate-based inhibitor.</title>
        <authorList>
            <person name="Gustafsson R."/>
            <person name="Jemth A.S."/>
            <person name="Gustafsson N.M."/>
            <person name="Farnegardh K."/>
            <person name="Loseva O."/>
            <person name="Wiita E."/>
            <person name="Bonagas N."/>
            <person name="Dahllund L."/>
            <person name="Llona-Minguez S."/>
            <person name="Haggblad M."/>
            <person name="Henriksson M."/>
            <person name="Andersson Y."/>
            <person name="Homan E."/>
            <person name="Helleday T."/>
            <person name="Stenmark P."/>
        </authorList>
    </citation>
    <scope>X-RAY CRYSTALLOGRAPHY (1.89 ANGSTROMS) OF 36-350 IN COMPLEX WITH PHOSPHATE; NAD AND INHIBITOR</scope>
    <scope>SUBUNIT</scope>
</reference>
<sequence length="350" mass="37895">MAATSLMSALAARLLQPAHSCSLRLRPFHLAAVRNEAVVISGRKLAQQIKQEVRQEVEEWVASGNKRPHLSVILVGENPASHSYVLNKTRAAAVVGINSETIMKPASISEEELLNLINKLNNDDNVDGLLVQLPLPEHIDERRICNAVSPDKDVDGFHVINVGRMCLDQYSMLPATPWGVWEIIKRTGIPTLGKNVVVAGRSKNVGMPIAMLLHTDGAHERPGGDATVTISHRYTPKEQLKKHTILADIVISAAGIPNLITADMIKEGAAVIDVGINRVHDPVTAKPKLVGDVDFEGVRQKAGYITPVPGGVGPMTVAMLMKNTIIAAKKVLRLEEREVLKSKELGVATN</sequence>
<dbReference type="EC" id="1.5.1.15" evidence="1 3"/>
<dbReference type="EC" id="3.5.4.9" evidence="8"/>
<dbReference type="EMBL" id="X16396">
    <property type="protein sequence ID" value="CAA34431.1"/>
    <property type="status" value="ALT_INIT"/>
    <property type="molecule type" value="mRNA"/>
</dbReference>
<dbReference type="EMBL" id="AK300035">
    <property type="protein sequence ID" value="BAG61846.1"/>
    <property type="molecule type" value="mRNA"/>
</dbReference>
<dbReference type="EMBL" id="AK222826">
    <property type="protein sequence ID" value="BAD96546.1"/>
    <property type="status" value="ALT_INIT"/>
    <property type="molecule type" value="mRNA"/>
</dbReference>
<dbReference type="EMBL" id="AK223041">
    <property type="protein sequence ID" value="BAD96761.1"/>
    <property type="status" value="ALT_INIT"/>
    <property type="molecule type" value="mRNA"/>
</dbReference>
<dbReference type="EMBL" id="AC073263">
    <property type="protein sequence ID" value="AAX93061.1"/>
    <property type="status" value="ALT_INIT"/>
    <property type="molecule type" value="Genomic_DNA"/>
</dbReference>
<dbReference type="EMBL" id="CH471053">
    <property type="protein sequence ID" value="EAW99671.1"/>
    <property type="molecule type" value="Genomic_DNA"/>
</dbReference>
<dbReference type="EMBL" id="CH471053">
    <property type="protein sequence ID" value="EAW99672.1"/>
    <property type="molecule type" value="Genomic_DNA"/>
</dbReference>
<dbReference type="EMBL" id="BC001548">
    <property type="protein sequence ID" value="AAH01548.2"/>
    <property type="molecule type" value="mRNA"/>
</dbReference>
<dbReference type="EMBL" id="BC015062">
    <property type="protein sequence ID" value="AAH15062.1"/>
    <property type="molecule type" value="mRNA"/>
</dbReference>
<dbReference type="EMBL" id="BC017054">
    <property type="protein sequence ID" value="AAH17054.2"/>
    <property type="molecule type" value="mRNA"/>
</dbReference>
<dbReference type="CCDS" id="CCDS1935.2">
    <molecule id="P13995-1"/>
</dbReference>
<dbReference type="PIR" id="S14902">
    <property type="entry name" value="DEHUMT"/>
</dbReference>
<dbReference type="RefSeq" id="NP_001397121.1">
    <molecule id="P13995-2"/>
    <property type="nucleotide sequence ID" value="NM_001410192.1"/>
</dbReference>
<dbReference type="RefSeq" id="NP_006627.2">
    <molecule id="P13995-1"/>
    <property type="nucleotide sequence ID" value="NM_006636.4"/>
</dbReference>
<dbReference type="RefSeq" id="XP_006711987.1">
    <molecule id="P13995-2"/>
    <property type="nucleotide sequence ID" value="XM_006711924.3"/>
</dbReference>
<dbReference type="RefSeq" id="XP_054196197.1">
    <molecule id="P13995-2"/>
    <property type="nucleotide sequence ID" value="XM_054340222.1"/>
</dbReference>
<dbReference type="PDB" id="5TC4">
    <property type="method" value="X-ray"/>
    <property type="resolution" value="1.89 A"/>
    <property type="chains" value="A=36-350"/>
</dbReference>
<dbReference type="PDB" id="6JIB">
    <property type="method" value="X-ray"/>
    <property type="resolution" value="2.25 A"/>
    <property type="chains" value="A/B=36-338"/>
</dbReference>
<dbReference type="PDB" id="6JID">
    <property type="method" value="X-ray"/>
    <property type="resolution" value="2.50 A"/>
    <property type="chains" value="A/B=36-338"/>
</dbReference>
<dbReference type="PDB" id="6KG2">
    <property type="method" value="X-ray"/>
    <property type="resolution" value="2.25 A"/>
    <property type="chains" value="A/B=36-338"/>
</dbReference>
<dbReference type="PDB" id="6S4A">
    <property type="method" value="X-ray"/>
    <property type="resolution" value="1.95 A"/>
    <property type="chains" value="A/B=36-350"/>
</dbReference>
<dbReference type="PDB" id="6S4E">
    <property type="method" value="X-ray"/>
    <property type="resolution" value="1.90 A"/>
    <property type="chains" value="A=36-350"/>
</dbReference>
<dbReference type="PDB" id="6S4F">
    <property type="method" value="X-ray"/>
    <property type="resolution" value="2.20 A"/>
    <property type="chains" value="A/B=36-350"/>
</dbReference>
<dbReference type="PDB" id="7EHJ">
    <property type="method" value="X-ray"/>
    <property type="resolution" value="2.16 A"/>
    <property type="chains" value="A/B=36-350"/>
</dbReference>
<dbReference type="PDB" id="7EHM">
    <property type="method" value="X-ray"/>
    <property type="resolution" value="2.13 A"/>
    <property type="chains" value="A/B=36-350"/>
</dbReference>
<dbReference type="PDB" id="7EHN">
    <property type="method" value="X-ray"/>
    <property type="resolution" value="2.25 A"/>
    <property type="chains" value="A/B=36-350"/>
</dbReference>
<dbReference type="PDB" id="7EHV">
    <property type="method" value="X-ray"/>
    <property type="resolution" value="2.61 A"/>
    <property type="chains" value="A/B=36-350"/>
</dbReference>
<dbReference type="PDB" id="9IS9">
    <property type="method" value="X-ray"/>
    <property type="resolution" value="2.12 A"/>
    <property type="chains" value="A/B=36-350"/>
</dbReference>
<dbReference type="PDB" id="9ISC">
    <property type="method" value="X-ray"/>
    <property type="resolution" value="2.54 A"/>
    <property type="chains" value="A/B=36-350"/>
</dbReference>
<dbReference type="PDB" id="9IT3">
    <property type="method" value="X-ray"/>
    <property type="resolution" value="2.06 A"/>
    <property type="chains" value="A/B=36-350"/>
</dbReference>
<dbReference type="PDB" id="9IT6">
    <property type="method" value="X-ray"/>
    <property type="resolution" value="2.04 A"/>
    <property type="chains" value="A/B=36-350"/>
</dbReference>
<dbReference type="PDB" id="9ITA">
    <property type="method" value="X-ray"/>
    <property type="resolution" value="2.35 A"/>
    <property type="chains" value="A/B=36-350"/>
</dbReference>
<dbReference type="PDBsum" id="5TC4"/>
<dbReference type="PDBsum" id="6JIB"/>
<dbReference type="PDBsum" id="6JID"/>
<dbReference type="PDBsum" id="6KG2"/>
<dbReference type="PDBsum" id="6S4A"/>
<dbReference type="PDBsum" id="6S4E"/>
<dbReference type="PDBsum" id="6S4F"/>
<dbReference type="PDBsum" id="7EHJ"/>
<dbReference type="PDBsum" id="7EHM"/>
<dbReference type="PDBsum" id="7EHN"/>
<dbReference type="PDBsum" id="7EHV"/>
<dbReference type="PDBsum" id="9IS9"/>
<dbReference type="PDBsum" id="9ISC"/>
<dbReference type="PDBsum" id="9IT3"/>
<dbReference type="PDBsum" id="9IT6"/>
<dbReference type="PDBsum" id="9ITA"/>
<dbReference type="SMR" id="P13995"/>
<dbReference type="BioGRID" id="116011">
    <property type="interactions" value="121"/>
</dbReference>
<dbReference type="CORUM" id="P13995"/>
<dbReference type="FunCoup" id="P13995">
    <property type="interactions" value="810"/>
</dbReference>
<dbReference type="IntAct" id="P13995">
    <property type="interactions" value="38"/>
</dbReference>
<dbReference type="MINT" id="P13995"/>
<dbReference type="STRING" id="9606.ENSP00000377617"/>
<dbReference type="BindingDB" id="P13995"/>
<dbReference type="ChEMBL" id="CHEMBL3621036"/>
<dbReference type="DrugBank" id="DB00157">
    <property type="generic name" value="NADH"/>
</dbReference>
<dbReference type="DrugBank" id="DB00116">
    <property type="generic name" value="Tetrahydrofolic acid"/>
</dbReference>
<dbReference type="GlyGen" id="P13995">
    <property type="glycosylation" value="1 site, 1 O-linked glycan (1 site)"/>
</dbReference>
<dbReference type="iPTMnet" id="P13995"/>
<dbReference type="PhosphoSitePlus" id="P13995"/>
<dbReference type="BioMuta" id="MTHFD2"/>
<dbReference type="DMDM" id="115311607"/>
<dbReference type="jPOST" id="P13995"/>
<dbReference type="MassIVE" id="P13995"/>
<dbReference type="PaxDb" id="9606-ENSP00000377617"/>
<dbReference type="PeptideAtlas" id="P13995"/>
<dbReference type="ProteomicsDB" id="53016">
    <molecule id="P13995-1"/>
</dbReference>
<dbReference type="ProteomicsDB" id="69375"/>
<dbReference type="Pumba" id="P13995"/>
<dbReference type="Antibodypedia" id="3292">
    <property type="antibodies" value="201 antibodies from 30 providers"/>
</dbReference>
<dbReference type="DNASU" id="10797"/>
<dbReference type="Ensembl" id="ENST00000394053.7">
    <molecule id="P13995-1"/>
    <property type="protein sequence ID" value="ENSP00000377617.2"/>
    <property type="gene ID" value="ENSG00000065911.13"/>
</dbReference>
<dbReference type="Ensembl" id="ENST00000677170.1">
    <molecule id="P13995-2"/>
    <property type="protein sequence ID" value="ENSP00000503486.1"/>
    <property type="gene ID" value="ENSG00000065911.13"/>
</dbReference>
<dbReference type="Ensembl" id="ENST00000678623.1">
    <molecule id="P13995-2"/>
    <property type="protein sequence ID" value="ENSP00000504392.1"/>
    <property type="gene ID" value="ENSG00000065911.13"/>
</dbReference>
<dbReference type="Ensembl" id="ENST00000678684.1">
    <molecule id="P13995-2"/>
    <property type="protein sequence ID" value="ENSP00000504687.1"/>
    <property type="gene ID" value="ENSG00000065911.13"/>
</dbReference>
<dbReference type="Ensembl" id="ENST00000678731.1">
    <molecule id="P13995-2"/>
    <property type="protein sequence ID" value="ENSP00000503927.1"/>
    <property type="gene ID" value="ENSG00000065911.13"/>
</dbReference>
<dbReference type="Ensembl" id="ENST00000679055.1">
    <molecule id="P13995-2"/>
    <property type="protein sequence ID" value="ENSP00000503701.1"/>
    <property type="gene ID" value="ENSG00000065911.13"/>
</dbReference>
<dbReference type="GeneID" id="10797"/>
<dbReference type="KEGG" id="hsa:10797"/>
<dbReference type="MANE-Select" id="ENST00000394053.7">
    <property type="protein sequence ID" value="ENSP00000377617.2"/>
    <property type="RefSeq nucleotide sequence ID" value="NM_006636.4"/>
    <property type="RefSeq protein sequence ID" value="NP_006627.2"/>
</dbReference>
<dbReference type="UCSC" id="uc002skk.4">
    <molecule id="P13995-1"/>
    <property type="organism name" value="human"/>
</dbReference>
<dbReference type="AGR" id="HGNC:7434"/>
<dbReference type="CTD" id="10797"/>
<dbReference type="DisGeNET" id="10797"/>
<dbReference type="GeneCards" id="MTHFD2"/>
<dbReference type="HGNC" id="HGNC:7434">
    <property type="gene designation" value="MTHFD2"/>
</dbReference>
<dbReference type="HPA" id="ENSG00000065911">
    <property type="expression patterns" value="Low tissue specificity"/>
</dbReference>
<dbReference type="MalaCards" id="MTHFD2"/>
<dbReference type="MIM" id="604887">
    <property type="type" value="gene"/>
</dbReference>
<dbReference type="neXtProt" id="NX_P13995"/>
<dbReference type="OpenTargets" id="ENSG00000065911"/>
<dbReference type="PharmGKB" id="PA31238"/>
<dbReference type="VEuPathDB" id="HostDB:ENSG00000065911"/>
<dbReference type="eggNOG" id="KOG0089">
    <property type="taxonomic scope" value="Eukaryota"/>
</dbReference>
<dbReference type="GeneTree" id="ENSGT00940000154863"/>
<dbReference type="HOGENOM" id="CLU_034045_0_1_1"/>
<dbReference type="InParanoid" id="P13995"/>
<dbReference type="OMA" id="VCHILTK"/>
<dbReference type="OrthoDB" id="5126881at2759"/>
<dbReference type="PAN-GO" id="P13995">
    <property type="GO annotations" value="5 GO annotations based on evolutionary models"/>
</dbReference>
<dbReference type="PhylomeDB" id="P13995"/>
<dbReference type="TreeFam" id="TF323998"/>
<dbReference type="BioCyc" id="MetaCyc:HS00858-MONOMER"/>
<dbReference type="BRENDA" id="1.5.1.15">
    <property type="organism ID" value="2681"/>
</dbReference>
<dbReference type="BRENDA" id="1.5.1.5">
    <property type="organism ID" value="2681"/>
</dbReference>
<dbReference type="BRENDA" id="3.5.4.9">
    <property type="organism ID" value="2681"/>
</dbReference>
<dbReference type="PathwayCommons" id="P13995"/>
<dbReference type="Reactome" id="R-HSA-196757">
    <property type="pathway name" value="Metabolism of folate and pterines"/>
</dbReference>
<dbReference type="SABIO-RK" id="P13995"/>
<dbReference type="SignaLink" id="P13995"/>
<dbReference type="SIGNOR" id="P13995"/>
<dbReference type="BioGRID-ORCS" id="10797">
    <property type="hits" value="54 hits in 1176 CRISPR screens"/>
</dbReference>
<dbReference type="CD-CODE" id="91857CE7">
    <property type="entry name" value="Nucleolus"/>
</dbReference>
<dbReference type="GeneWiki" id="MTHFD2"/>
<dbReference type="GenomeRNAi" id="10797"/>
<dbReference type="Pharos" id="P13995">
    <property type="development level" value="Tchem"/>
</dbReference>
<dbReference type="PRO" id="PR:P13995"/>
<dbReference type="Proteomes" id="UP000005640">
    <property type="component" value="Chromosome 2"/>
</dbReference>
<dbReference type="RNAct" id="P13995">
    <property type="molecule type" value="protein"/>
</dbReference>
<dbReference type="Bgee" id="ENSG00000065911">
    <property type="expression patterns" value="Expressed in cartilage tissue and 199 other cell types or tissues"/>
</dbReference>
<dbReference type="ExpressionAtlas" id="P13995">
    <property type="expression patterns" value="baseline and differential"/>
</dbReference>
<dbReference type="GO" id="GO:0005615">
    <property type="term" value="C:extracellular space"/>
    <property type="evidence" value="ECO:0007005"/>
    <property type="project" value="UniProtKB"/>
</dbReference>
<dbReference type="GO" id="GO:0005759">
    <property type="term" value="C:mitochondrial matrix"/>
    <property type="evidence" value="ECO:0000304"/>
    <property type="project" value="Reactome"/>
</dbReference>
<dbReference type="GO" id="GO:0005739">
    <property type="term" value="C:mitochondrion"/>
    <property type="evidence" value="ECO:0000314"/>
    <property type="project" value="HPA"/>
</dbReference>
<dbReference type="GO" id="GO:0000287">
    <property type="term" value="F:magnesium ion binding"/>
    <property type="evidence" value="ECO:0000314"/>
    <property type="project" value="UniProtKB"/>
</dbReference>
<dbReference type="GO" id="GO:0004477">
    <property type="term" value="F:methenyltetrahydrofolate cyclohydrolase activity"/>
    <property type="evidence" value="ECO:0000314"/>
    <property type="project" value="UniProtKB"/>
</dbReference>
<dbReference type="GO" id="GO:0004487">
    <property type="term" value="F:methylenetetrahydrofolate dehydrogenase (NAD+) activity"/>
    <property type="evidence" value="ECO:0000314"/>
    <property type="project" value="UniProtKB"/>
</dbReference>
<dbReference type="GO" id="GO:0004488">
    <property type="term" value="F:methylenetetrahydrofolate dehydrogenase (NADP+) activity"/>
    <property type="evidence" value="ECO:0000314"/>
    <property type="project" value="UniProtKB"/>
</dbReference>
<dbReference type="GO" id="GO:0042301">
    <property type="term" value="F:phosphate ion binding"/>
    <property type="evidence" value="ECO:0000314"/>
    <property type="project" value="UniProtKB"/>
</dbReference>
<dbReference type="GO" id="GO:0046655">
    <property type="term" value="P:folic acid metabolic process"/>
    <property type="evidence" value="ECO:0000304"/>
    <property type="project" value="Reactome"/>
</dbReference>
<dbReference type="GO" id="GO:0015943">
    <property type="term" value="P:formate biosynthetic process"/>
    <property type="evidence" value="ECO:0007669"/>
    <property type="project" value="Ensembl"/>
</dbReference>
<dbReference type="GO" id="GO:0035999">
    <property type="term" value="P:tetrahydrofolate interconversion"/>
    <property type="evidence" value="ECO:0000318"/>
    <property type="project" value="GO_Central"/>
</dbReference>
<dbReference type="GO" id="GO:0046653">
    <property type="term" value="P:tetrahydrofolate metabolic process"/>
    <property type="evidence" value="ECO:0000314"/>
    <property type="project" value="UniProtKB"/>
</dbReference>
<dbReference type="CDD" id="cd01080">
    <property type="entry name" value="NAD_bind_m-THF_DH_Cyclohyd"/>
    <property type="match status" value="1"/>
</dbReference>
<dbReference type="FunFam" id="3.40.50.10860:FF:000001">
    <property type="entry name" value="Bifunctional protein FolD"/>
    <property type="match status" value="1"/>
</dbReference>
<dbReference type="FunFam" id="3.40.50.720:FF:000070">
    <property type="entry name" value="probable bifunctional methylenetetrahydrofolate dehydrogenase/cyclohydrolase 2"/>
    <property type="match status" value="1"/>
</dbReference>
<dbReference type="Gene3D" id="3.40.50.10860">
    <property type="entry name" value="Leucine Dehydrogenase, chain A, domain 1"/>
    <property type="match status" value="1"/>
</dbReference>
<dbReference type="Gene3D" id="3.40.50.720">
    <property type="entry name" value="NAD(P)-binding Rossmann-like Domain"/>
    <property type="match status" value="1"/>
</dbReference>
<dbReference type="HAMAP" id="MF_01576">
    <property type="entry name" value="THF_DHG_CYH"/>
    <property type="match status" value="1"/>
</dbReference>
<dbReference type="InterPro" id="IPR046346">
    <property type="entry name" value="Aminoacid_DH-like_N_sf"/>
</dbReference>
<dbReference type="InterPro" id="IPR036291">
    <property type="entry name" value="NAD(P)-bd_dom_sf"/>
</dbReference>
<dbReference type="InterPro" id="IPR000672">
    <property type="entry name" value="THF_DH/CycHdrlase"/>
</dbReference>
<dbReference type="InterPro" id="IPR020630">
    <property type="entry name" value="THF_DH/CycHdrlase_cat_dom"/>
</dbReference>
<dbReference type="InterPro" id="IPR020867">
    <property type="entry name" value="THF_DH/CycHdrlase_CS"/>
</dbReference>
<dbReference type="InterPro" id="IPR020631">
    <property type="entry name" value="THF_DH/CycHdrlase_NAD-bd_dom"/>
</dbReference>
<dbReference type="PANTHER" id="PTHR48099:SF15">
    <property type="entry name" value="BIFUNCTIONAL METHYLENETETRAHYDROFOLATE DEHYDROGENASE_CYCLOHYDROLASE, MITOCHONDRIAL"/>
    <property type="match status" value="1"/>
</dbReference>
<dbReference type="PANTHER" id="PTHR48099">
    <property type="entry name" value="C-1-TETRAHYDROFOLATE SYNTHASE, CYTOPLASMIC-RELATED"/>
    <property type="match status" value="1"/>
</dbReference>
<dbReference type="Pfam" id="PF00763">
    <property type="entry name" value="THF_DHG_CYH"/>
    <property type="match status" value="1"/>
</dbReference>
<dbReference type="Pfam" id="PF02882">
    <property type="entry name" value="THF_DHG_CYH_C"/>
    <property type="match status" value="1"/>
</dbReference>
<dbReference type="PRINTS" id="PR00085">
    <property type="entry name" value="THFDHDRGNASE"/>
</dbReference>
<dbReference type="SUPFAM" id="SSF53223">
    <property type="entry name" value="Aminoacid dehydrogenase-like, N-terminal domain"/>
    <property type="match status" value="1"/>
</dbReference>
<dbReference type="SUPFAM" id="SSF51735">
    <property type="entry name" value="NAD(P)-binding Rossmann-fold domains"/>
    <property type="match status" value="1"/>
</dbReference>
<dbReference type="PROSITE" id="PS00766">
    <property type="entry name" value="THF_DHG_CYH_1"/>
    <property type="match status" value="1"/>
</dbReference>
<dbReference type="PROSITE" id="PS00767">
    <property type="entry name" value="THF_DHG_CYH_2"/>
    <property type="match status" value="1"/>
</dbReference>
<feature type="transit peptide" description="Mitochondrion" evidence="11">
    <location>
        <begin position="1"/>
        <end position="35"/>
    </location>
</feature>
<feature type="chain" id="PRO_0000034049" description="Bifunctional methylenetetrahydrofolate dehydrogenase/cyclohydrolase, mitochondrial">
    <location>
        <begin position="36"/>
        <end position="350"/>
    </location>
</feature>
<feature type="binding site" evidence="2">
    <location>
        <begin position="84"/>
        <end position="88"/>
    </location>
    <ligand>
        <name>substrate</name>
    </ligand>
</feature>
<feature type="binding site" evidence="2">
    <location>
        <begin position="131"/>
        <end position="133"/>
    </location>
    <ligand>
        <name>substrate</name>
    </ligand>
</feature>
<feature type="binding site" evidence="1 2">
    <location>
        <begin position="200"/>
        <end position="202"/>
    </location>
    <ligand>
        <name>NAD(+)</name>
        <dbReference type="ChEBI" id="CHEBI:57540"/>
    </ligand>
</feature>
<feature type="binding site" evidence="1 2">
    <location>
        <position position="233"/>
    </location>
    <ligand>
        <name>NAD(+)</name>
        <dbReference type="ChEBI" id="CHEBI:57540"/>
    </ligand>
</feature>
<feature type="binding site" evidence="2">
    <location>
        <begin position="309"/>
        <end position="313"/>
    </location>
    <ligand>
        <name>substrate</name>
    </ligand>
</feature>
<feature type="modified residue" description="N6-acetyllysine; alternate" evidence="10">
    <location>
        <position position="50"/>
    </location>
</feature>
<feature type="cross-link" description="Glycyl lysine isopeptide (Lys-Gly) (interchain with G-Cter in SUMO2); alternate" evidence="12">
    <location>
        <position position="50"/>
    </location>
</feature>
<feature type="splice variant" id="VSP_056188" description="In isoform 2." evidence="4 5">
    <location>
        <begin position="1"/>
        <end position="102"/>
    </location>
</feature>
<feature type="mutagenesis site" description="Significant loss of NAD and NADP-dependent dehydrogenase specific activity." evidence="1">
    <original>D</original>
    <variation>A</variation>
    <location>
        <position position="168"/>
    </location>
</feature>
<feature type="mutagenesis site" description="Complete loss of NAD and NADP-dependent dehydrogenase specific activity." evidence="1">
    <original>D</original>
    <variation>E</variation>
    <location>
        <position position="168"/>
    </location>
</feature>
<feature type="mutagenesis site" description="80% decrease in NAD-dependent dehydrogenase specific activity. 18% decrease in NADP-dependent dehydrogenase specific activity. Reduced affinity for magnesium." evidence="1">
    <original>D</original>
    <variation>N</variation>
    <location>
        <position position="168"/>
    </location>
</feature>
<feature type="mutagenesis site" description="82% decrease in NAD-dependent dehydrogenase specific activity. 65% decrease in NADP-dependent dehydrogenase specific activity. Reduced affinity for magnesium." evidence="1">
    <original>D</original>
    <variation>S</variation>
    <location>
        <position position="168"/>
    </location>
</feature>
<feature type="mutagenesis site" description="Complete loss of NAD and NADP-dependent dehydrogenase specific activity." evidence="1">
    <original>R</original>
    <variation>A</variation>
    <variation>S</variation>
    <variation>K</variation>
    <location>
        <position position="201"/>
    </location>
</feature>
<feature type="mutagenesis site" description="Complete loss of NAD and NADP-dependent dehydrogenase specific activity." evidence="1">
    <original>D</original>
    <variation>A</variation>
    <variation>S</variation>
    <variation>E</variation>
    <location>
        <position position="225"/>
    </location>
</feature>
<feature type="mutagenesis site" description="84% decrease in NAD-dependent dehydrogenase specific activity. 36% increase in NADP-dependent dehydrogenase specific activity. Reduced affinity for magnesium." evidence="1">
    <original>D</original>
    <variation>N</variation>
    <location>
        <position position="225"/>
    </location>
</feature>
<feature type="mutagenesis site" description="Significant loss of NAD and NADP-dependent dehydrogenase specific activity." evidence="1">
    <original>R</original>
    <variation>A</variation>
    <location>
        <position position="233"/>
    </location>
</feature>
<feature type="mutagenesis site" description="50% decrease in NAD and NADP-dependent dehydrogenase specific activity. Reduced affinity for magnesium." evidence="1">
    <original>R</original>
    <variation>K</variation>
    <location>
        <position position="233"/>
    </location>
</feature>
<feature type="mutagenesis site" description="Almost complete loss of NAD-dependent dehydrogenase specific activity. 50% decrease in NADP-dependent dehydrogenase specific activity." evidence="1">
    <original>R</original>
    <variation>S</variation>
    <location>
        <position position="233"/>
    </location>
</feature>
<feature type="sequence conflict" description="In Ref. 3; BAD96546." evidence="7" ref="3">
    <original>V</original>
    <variation>A</variation>
    <location>
        <position position="75"/>
    </location>
</feature>
<feature type="sequence conflict" description="In Ref. 3; BAD96761." evidence="7" ref="3">
    <original>V</original>
    <variation>A</variation>
    <location>
        <position position="95"/>
    </location>
</feature>
<feature type="helix" evidence="13">
    <location>
        <begin position="42"/>
        <end position="62"/>
    </location>
</feature>
<feature type="strand" evidence="13">
    <location>
        <begin position="69"/>
        <end position="76"/>
    </location>
</feature>
<feature type="helix" evidence="13">
    <location>
        <begin position="79"/>
        <end position="95"/>
    </location>
</feature>
<feature type="strand" evidence="13">
    <location>
        <begin position="98"/>
        <end position="104"/>
    </location>
</feature>
<feature type="helix" evidence="13">
    <location>
        <begin position="110"/>
        <end position="122"/>
    </location>
</feature>
<feature type="strand" evidence="13">
    <location>
        <begin position="128"/>
        <end position="131"/>
    </location>
</feature>
<feature type="helix" evidence="13">
    <location>
        <begin position="141"/>
        <end position="147"/>
    </location>
</feature>
<feature type="helix" evidence="13">
    <location>
        <begin position="150"/>
        <end position="152"/>
    </location>
</feature>
<feature type="helix" evidence="13">
    <location>
        <begin position="159"/>
        <end position="166"/>
    </location>
</feature>
<feature type="helix" evidence="13">
    <location>
        <begin position="175"/>
        <end position="187"/>
    </location>
</feature>
<feature type="strand" evidence="13">
    <location>
        <begin position="195"/>
        <end position="199"/>
    </location>
</feature>
<feature type="turn" evidence="13">
    <location>
        <begin position="203"/>
        <end position="205"/>
    </location>
</feature>
<feature type="helix" evidence="13">
    <location>
        <begin position="206"/>
        <end position="214"/>
    </location>
</feature>
<feature type="strand" evidence="13">
    <location>
        <begin position="219"/>
        <end position="221"/>
    </location>
</feature>
<feature type="strand" evidence="13">
    <location>
        <begin position="227"/>
        <end position="231"/>
    </location>
</feature>
<feature type="helix" evidence="13">
    <location>
        <begin position="237"/>
        <end position="244"/>
    </location>
</feature>
<feature type="strand" evidence="13">
    <location>
        <begin position="248"/>
        <end position="252"/>
    </location>
</feature>
<feature type="helix" evidence="13">
    <location>
        <begin position="262"/>
        <end position="264"/>
    </location>
</feature>
<feature type="strand" evidence="13">
    <location>
        <begin position="270"/>
        <end position="273"/>
    </location>
</feature>
<feature type="strand" evidence="13">
    <location>
        <begin position="277"/>
        <end position="279"/>
    </location>
</feature>
<feature type="turn" evidence="15">
    <location>
        <begin position="282"/>
        <end position="285"/>
    </location>
</feature>
<feature type="strand" evidence="13">
    <location>
        <begin position="288"/>
        <end position="290"/>
    </location>
</feature>
<feature type="helix" evidence="13">
    <location>
        <begin position="295"/>
        <end position="298"/>
    </location>
</feature>
<feature type="turn" evidence="13">
    <location>
        <begin position="299"/>
        <end position="301"/>
    </location>
</feature>
<feature type="strand" evidence="13">
    <location>
        <begin position="303"/>
        <end position="305"/>
    </location>
</feature>
<feature type="strand" evidence="13">
    <location>
        <begin position="308"/>
        <end position="311"/>
    </location>
</feature>
<feature type="helix" evidence="13">
    <location>
        <begin position="312"/>
        <end position="329"/>
    </location>
</feature>
<feature type="turn" evidence="14">
    <location>
        <begin position="330"/>
        <end position="332"/>
    </location>
</feature>
<evidence type="ECO:0000269" key="1">
    <source>
    </source>
</evidence>
<evidence type="ECO:0000269" key="2">
    <source>
    </source>
</evidence>
<evidence type="ECO:0000269" key="3">
    <source>
    </source>
</evidence>
<evidence type="ECO:0000303" key="4">
    <source>
    </source>
</evidence>
<evidence type="ECO:0000303" key="5">
    <source>
    </source>
</evidence>
<evidence type="ECO:0000303" key="6">
    <source>
    </source>
</evidence>
<evidence type="ECO:0000305" key="7"/>
<evidence type="ECO:0000305" key="8">
    <source>
    </source>
</evidence>
<evidence type="ECO:0007744" key="9">
    <source>
        <dbReference type="PDB" id="5TC4"/>
    </source>
</evidence>
<evidence type="ECO:0007744" key="10">
    <source>
    </source>
</evidence>
<evidence type="ECO:0007744" key="11">
    <source>
    </source>
</evidence>
<evidence type="ECO:0007744" key="12">
    <source>
    </source>
</evidence>
<evidence type="ECO:0007829" key="13">
    <source>
        <dbReference type="PDB" id="5TC4"/>
    </source>
</evidence>
<evidence type="ECO:0007829" key="14">
    <source>
        <dbReference type="PDB" id="6JIB"/>
    </source>
</evidence>
<evidence type="ECO:0007829" key="15">
    <source>
        <dbReference type="PDB" id="6S4F"/>
    </source>
</evidence>
<keyword id="KW-0002">3D-structure</keyword>
<keyword id="KW-0007">Acetylation</keyword>
<keyword id="KW-0025">Alternative splicing</keyword>
<keyword id="KW-0378">Hydrolase</keyword>
<keyword id="KW-1017">Isopeptide bond</keyword>
<keyword id="KW-0460">Magnesium</keyword>
<keyword id="KW-0496">Mitochondrion</keyword>
<keyword id="KW-0511">Multifunctional enzyme</keyword>
<keyword id="KW-0520">NAD</keyword>
<keyword id="KW-0521">NADP</keyword>
<keyword id="KW-0554">One-carbon metabolism</keyword>
<keyword id="KW-0560">Oxidoreductase</keyword>
<keyword id="KW-1267">Proteomics identification</keyword>
<keyword id="KW-1185">Reference proteome</keyword>
<keyword id="KW-0809">Transit peptide</keyword>
<keyword id="KW-0832">Ubl conjugation</keyword>
<organism>
    <name type="scientific">Homo sapiens</name>
    <name type="common">Human</name>
    <dbReference type="NCBI Taxonomy" id="9606"/>
    <lineage>
        <taxon>Eukaryota</taxon>
        <taxon>Metazoa</taxon>
        <taxon>Chordata</taxon>
        <taxon>Craniata</taxon>
        <taxon>Vertebrata</taxon>
        <taxon>Euteleostomi</taxon>
        <taxon>Mammalia</taxon>
        <taxon>Eutheria</taxon>
        <taxon>Euarchontoglires</taxon>
        <taxon>Primates</taxon>
        <taxon>Haplorrhini</taxon>
        <taxon>Catarrhini</taxon>
        <taxon>Hominidae</taxon>
        <taxon>Homo</taxon>
    </lineage>
</organism>
<accession>P13995</accession>
<accession>Q53G90</accession>
<accession>Q53GV5</accession>
<accession>Q53S36</accession>
<accession>Q7Z650</accession>
<name>MTDC_HUMAN</name>
<proteinExistence type="evidence at protein level"/>